<feature type="initiator methionine" description="Removed" evidence="1">
    <location>
        <position position="1"/>
    </location>
</feature>
<feature type="chain" id="PRO_0000103263" description="Branched-chain-amino-acid aminotransferase">
    <location>
        <begin position="2"/>
        <end position="309"/>
    </location>
</feature>
<feature type="modified residue" description="N6-(pyridoxal phosphate)lysine" evidence="1">
    <location>
        <position position="160"/>
    </location>
</feature>
<proteinExistence type="inferred from homology"/>
<keyword id="KW-0028">Amino-acid biosynthesis</keyword>
<keyword id="KW-0032">Aminotransferase</keyword>
<keyword id="KW-0100">Branched-chain amino acid biosynthesis</keyword>
<keyword id="KW-0663">Pyridoxal phosphate</keyword>
<keyword id="KW-1185">Reference proteome</keyword>
<keyword id="KW-0808">Transferase</keyword>
<accession>P0AB82</accession>
<accession>P00510</accession>
<accession>Q47299</accession>
<reference key="1">
    <citation type="journal article" date="2001" name="Nature">
        <title>Genome sequence of enterohaemorrhagic Escherichia coli O157:H7.</title>
        <authorList>
            <person name="Perna N.T."/>
            <person name="Plunkett G. III"/>
            <person name="Burland V."/>
            <person name="Mau B."/>
            <person name="Glasner J.D."/>
            <person name="Rose D.J."/>
            <person name="Mayhew G.F."/>
            <person name="Evans P.S."/>
            <person name="Gregor J."/>
            <person name="Kirkpatrick H.A."/>
            <person name="Posfai G."/>
            <person name="Hackett J."/>
            <person name="Klink S."/>
            <person name="Boutin A."/>
            <person name="Shao Y."/>
            <person name="Miller L."/>
            <person name="Grotbeck E.J."/>
            <person name="Davis N.W."/>
            <person name="Lim A."/>
            <person name="Dimalanta E.T."/>
            <person name="Potamousis K."/>
            <person name="Apodaca J."/>
            <person name="Anantharaman T.S."/>
            <person name="Lin J."/>
            <person name="Yen G."/>
            <person name="Schwartz D.C."/>
            <person name="Welch R.A."/>
            <person name="Blattner F.R."/>
        </authorList>
    </citation>
    <scope>NUCLEOTIDE SEQUENCE [LARGE SCALE GENOMIC DNA]</scope>
    <source>
        <strain>O157:H7 / EDL933 / ATCC 700927 / EHEC</strain>
    </source>
</reference>
<reference key="2">
    <citation type="journal article" date="2001" name="DNA Res.">
        <title>Complete genome sequence of enterohemorrhagic Escherichia coli O157:H7 and genomic comparison with a laboratory strain K-12.</title>
        <authorList>
            <person name="Hayashi T."/>
            <person name="Makino K."/>
            <person name="Ohnishi M."/>
            <person name="Kurokawa K."/>
            <person name="Ishii K."/>
            <person name="Yokoyama K."/>
            <person name="Han C.-G."/>
            <person name="Ohtsubo E."/>
            <person name="Nakayama K."/>
            <person name="Murata T."/>
            <person name="Tanaka M."/>
            <person name="Tobe T."/>
            <person name="Iida T."/>
            <person name="Takami H."/>
            <person name="Honda T."/>
            <person name="Sasakawa C."/>
            <person name="Ogasawara N."/>
            <person name="Yasunaga T."/>
            <person name="Kuhara S."/>
            <person name="Shiba T."/>
            <person name="Hattori M."/>
            <person name="Shinagawa H."/>
        </authorList>
    </citation>
    <scope>NUCLEOTIDE SEQUENCE [LARGE SCALE GENOMIC DNA]</scope>
    <source>
        <strain>O157:H7 / Sakai / RIMD 0509952 / EHEC</strain>
    </source>
</reference>
<comment type="function">
    <text evidence="1">Acts on leucine, isoleucine and valine.</text>
</comment>
<comment type="catalytic activity">
    <reaction>
        <text>L-leucine + 2-oxoglutarate = 4-methyl-2-oxopentanoate + L-glutamate</text>
        <dbReference type="Rhea" id="RHEA:18321"/>
        <dbReference type="ChEBI" id="CHEBI:16810"/>
        <dbReference type="ChEBI" id="CHEBI:17865"/>
        <dbReference type="ChEBI" id="CHEBI:29985"/>
        <dbReference type="ChEBI" id="CHEBI:57427"/>
        <dbReference type="EC" id="2.6.1.42"/>
    </reaction>
</comment>
<comment type="catalytic activity">
    <reaction>
        <text>L-isoleucine + 2-oxoglutarate = (S)-3-methyl-2-oxopentanoate + L-glutamate</text>
        <dbReference type="Rhea" id="RHEA:24801"/>
        <dbReference type="ChEBI" id="CHEBI:16810"/>
        <dbReference type="ChEBI" id="CHEBI:29985"/>
        <dbReference type="ChEBI" id="CHEBI:35146"/>
        <dbReference type="ChEBI" id="CHEBI:58045"/>
        <dbReference type="EC" id="2.6.1.42"/>
    </reaction>
</comment>
<comment type="catalytic activity">
    <reaction>
        <text>L-valine + 2-oxoglutarate = 3-methyl-2-oxobutanoate + L-glutamate</text>
        <dbReference type="Rhea" id="RHEA:24813"/>
        <dbReference type="ChEBI" id="CHEBI:11851"/>
        <dbReference type="ChEBI" id="CHEBI:16810"/>
        <dbReference type="ChEBI" id="CHEBI:29985"/>
        <dbReference type="ChEBI" id="CHEBI:57762"/>
        <dbReference type="EC" id="2.6.1.42"/>
    </reaction>
</comment>
<comment type="cofactor">
    <cofactor evidence="1">
        <name>pyridoxal 5'-phosphate</name>
        <dbReference type="ChEBI" id="CHEBI:597326"/>
    </cofactor>
</comment>
<comment type="pathway">
    <text>Amino-acid biosynthesis; L-isoleucine biosynthesis; L-isoleucine from 2-oxobutanoate: step 4/4.</text>
</comment>
<comment type="pathway">
    <text>Amino-acid biosynthesis; L-leucine biosynthesis; L-leucine from 3-methyl-2-oxobutanoate: step 4/4.</text>
</comment>
<comment type="pathway">
    <text>Amino-acid biosynthesis; L-valine biosynthesis; L-valine from pyruvate: step 4/4.</text>
</comment>
<comment type="subunit">
    <text evidence="1">Homohexamer.</text>
</comment>
<comment type="similarity">
    <text evidence="2">Belongs to the class-IV pyridoxal-phosphate-dependent aminotransferase family.</text>
</comment>
<organism>
    <name type="scientific">Escherichia coli O157:H7</name>
    <dbReference type="NCBI Taxonomy" id="83334"/>
    <lineage>
        <taxon>Bacteria</taxon>
        <taxon>Pseudomonadati</taxon>
        <taxon>Pseudomonadota</taxon>
        <taxon>Gammaproteobacteria</taxon>
        <taxon>Enterobacterales</taxon>
        <taxon>Enterobacteriaceae</taxon>
        <taxon>Escherichia</taxon>
    </lineage>
</organism>
<sequence>MTTKKADYIWFNGEMVRWEDAKVHVMSHALHYGTSVFEGIRCYDSHKGPVVFRHREHMQRLHDSAKIYRFPVSQSIDELMEACRDVIRKNNLTSAYIRPLIFVGDVGMGVNPPAGYSTDVIIAAFPWGAYLGAEALEQGIDAMVSSWNRAAPNTIPTAAKAGGNYLSSLLVGSEARRHGYQEGIALDVNGYISEGAGENLFEVKDGVLFTPPFTSSALPGITRDAIIKLAKELGIEVREQVLSRESLYLADEVFMSGTAAEITPVRSVDGIQVGEGRCGPVTKRIQQAFFGLFTGETEDKWGWLDQVNQ</sequence>
<gene>
    <name type="primary">ilvE</name>
    <name type="ordered locus">Z5281</name>
    <name type="ordered locus">ECs4704</name>
</gene>
<evidence type="ECO:0000250" key="1"/>
<evidence type="ECO:0000305" key="2"/>
<name>ILVE_ECO57</name>
<dbReference type="EC" id="2.6.1.42"/>
<dbReference type="EMBL" id="AE005174">
    <property type="protein sequence ID" value="AAG58965.1"/>
    <property type="molecule type" value="Genomic_DNA"/>
</dbReference>
<dbReference type="EMBL" id="BA000007">
    <property type="protein sequence ID" value="BAB38127.1"/>
    <property type="molecule type" value="Genomic_DNA"/>
</dbReference>
<dbReference type="PIR" id="A86063">
    <property type="entry name" value="A86063"/>
</dbReference>
<dbReference type="PIR" id="H91216">
    <property type="entry name" value="H91216"/>
</dbReference>
<dbReference type="RefSeq" id="NP_312731.1">
    <property type="nucleotide sequence ID" value="NC_002695.1"/>
</dbReference>
<dbReference type="RefSeq" id="WP_000208520.1">
    <property type="nucleotide sequence ID" value="NZ_VOAI01000017.1"/>
</dbReference>
<dbReference type="SMR" id="P0AB82"/>
<dbReference type="STRING" id="155864.Z5281"/>
<dbReference type="GeneID" id="75204761"/>
<dbReference type="GeneID" id="915283"/>
<dbReference type="KEGG" id="ece:Z5281"/>
<dbReference type="KEGG" id="ecs:ECs_4704"/>
<dbReference type="PATRIC" id="fig|386585.9.peg.4909"/>
<dbReference type="eggNOG" id="COG0115">
    <property type="taxonomic scope" value="Bacteria"/>
</dbReference>
<dbReference type="HOGENOM" id="CLU_020844_3_1_6"/>
<dbReference type="OMA" id="LTEVFAC"/>
<dbReference type="UniPathway" id="UPA00047">
    <property type="reaction ID" value="UER00058"/>
</dbReference>
<dbReference type="UniPathway" id="UPA00048">
    <property type="reaction ID" value="UER00073"/>
</dbReference>
<dbReference type="UniPathway" id="UPA00049">
    <property type="reaction ID" value="UER00062"/>
</dbReference>
<dbReference type="Proteomes" id="UP000000558">
    <property type="component" value="Chromosome"/>
</dbReference>
<dbReference type="Proteomes" id="UP000002519">
    <property type="component" value="Chromosome"/>
</dbReference>
<dbReference type="GO" id="GO:0005829">
    <property type="term" value="C:cytosol"/>
    <property type="evidence" value="ECO:0007669"/>
    <property type="project" value="TreeGrafter"/>
</dbReference>
<dbReference type="GO" id="GO:0052656">
    <property type="term" value="F:L-isoleucine-2-oxoglutarate transaminase activity"/>
    <property type="evidence" value="ECO:0007669"/>
    <property type="project" value="RHEA"/>
</dbReference>
<dbReference type="GO" id="GO:0052654">
    <property type="term" value="F:L-leucine-2-oxoglutarate transaminase activity"/>
    <property type="evidence" value="ECO:0007669"/>
    <property type="project" value="RHEA"/>
</dbReference>
<dbReference type="GO" id="GO:0052655">
    <property type="term" value="F:L-valine-2-oxoglutarate transaminase activity"/>
    <property type="evidence" value="ECO:0007669"/>
    <property type="project" value="RHEA"/>
</dbReference>
<dbReference type="GO" id="GO:0006532">
    <property type="term" value="P:aspartate biosynthetic process"/>
    <property type="evidence" value="ECO:0007669"/>
    <property type="project" value="TreeGrafter"/>
</dbReference>
<dbReference type="GO" id="GO:0009097">
    <property type="term" value="P:isoleucine biosynthetic process"/>
    <property type="evidence" value="ECO:0007669"/>
    <property type="project" value="UniProtKB-UniPathway"/>
</dbReference>
<dbReference type="GO" id="GO:0009098">
    <property type="term" value="P:L-leucine biosynthetic process"/>
    <property type="evidence" value="ECO:0007669"/>
    <property type="project" value="UniProtKB-UniPathway"/>
</dbReference>
<dbReference type="GO" id="GO:0009099">
    <property type="term" value="P:L-valine biosynthetic process"/>
    <property type="evidence" value="ECO:0007669"/>
    <property type="project" value="UniProtKB-UniPathway"/>
</dbReference>
<dbReference type="CDD" id="cd01557">
    <property type="entry name" value="BCAT_beta_family"/>
    <property type="match status" value="1"/>
</dbReference>
<dbReference type="FunFam" id="3.20.10.10:FF:000001">
    <property type="entry name" value="Branched-chain-amino-acid aminotransferase"/>
    <property type="match status" value="1"/>
</dbReference>
<dbReference type="FunFam" id="3.30.470.10:FF:000001">
    <property type="entry name" value="Branched-chain-amino-acid aminotransferase"/>
    <property type="match status" value="1"/>
</dbReference>
<dbReference type="Gene3D" id="3.30.470.10">
    <property type="match status" value="1"/>
</dbReference>
<dbReference type="Gene3D" id="3.20.10.10">
    <property type="entry name" value="D-amino Acid Aminotransferase, subunit A, domain 2"/>
    <property type="match status" value="1"/>
</dbReference>
<dbReference type="InterPro" id="IPR001544">
    <property type="entry name" value="Aminotrans_IV"/>
</dbReference>
<dbReference type="InterPro" id="IPR018300">
    <property type="entry name" value="Aminotrans_IV_CS"/>
</dbReference>
<dbReference type="InterPro" id="IPR036038">
    <property type="entry name" value="Aminotransferase-like"/>
</dbReference>
<dbReference type="InterPro" id="IPR005785">
    <property type="entry name" value="B_amino_transI"/>
</dbReference>
<dbReference type="InterPro" id="IPR043132">
    <property type="entry name" value="BCAT-like_C"/>
</dbReference>
<dbReference type="InterPro" id="IPR043131">
    <property type="entry name" value="BCAT-like_N"/>
</dbReference>
<dbReference type="InterPro" id="IPR033939">
    <property type="entry name" value="BCAT_family"/>
</dbReference>
<dbReference type="InterPro" id="IPR050571">
    <property type="entry name" value="Class-IV_PLP-Dep_Aminotrnsfr"/>
</dbReference>
<dbReference type="NCBIfam" id="TIGR01122">
    <property type="entry name" value="ilvE_I"/>
    <property type="match status" value="1"/>
</dbReference>
<dbReference type="NCBIfam" id="NF005146">
    <property type="entry name" value="PRK06606.1"/>
    <property type="match status" value="1"/>
</dbReference>
<dbReference type="PANTHER" id="PTHR42743">
    <property type="entry name" value="AMINO-ACID AMINOTRANSFERASE"/>
    <property type="match status" value="1"/>
</dbReference>
<dbReference type="PANTHER" id="PTHR42743:SF11">
    <property type="entry name" value="AMINODEOXYCHORISMATE LYASE"/>
    <property type="match status" value="1"/>
</dbReference>
<dbReference type="Pfam" id="PF01063">
    <property type="entry name" value="Aminotran_4"/>
    <property type="match status" value="1"/>
</dbReference>
<dbReference type="SUPFAM" id="SSF56752">
    <property type="entry name" value="D-aminoacid aminotransferase-like PLP-dependent enzymes"/>
    <property type="match status" value="1"/>
</dbReference>
<dbReference type="PROSITE" id="PS00770">
    <property type="entry name" value="AA_TRANSFER_CLASS_4"/>
    <property type="match status" value="1"/>
</dbReference>
<protein>
    <recommendedName>
        <fullName>Branched-chain-amino-acid aminotransferase</fullName>
        <shortName>BCAT</shortName>
        <ecNumber>2.6.1.42</ecNumber>
    </recommendedName>
    <alternativeName>
        <fullName>Transaminase B</fullName>
    </alternativeName>
</protein>